<organism>
    <name type="scientific">Pseudomonas savastanoi pv. phaseolicola (strain 1448A / Race 6)</name>
    <name type="common">Pseudomonas syringae pv. phaseolicola (strain 1448A / Race 6)</name>
    <dbReference type="NCBI Taxonomy" id="264730"/>
    <lineage>
        <taxon>Bacteria</taxon>
        <taxon>Pseudomonadati</taxon>
        <taxon>Pseudomonadota</taxon>
        <taxon>Gammaproteobacteria</taxon>
        <taxon>Pseudomonadales</taxon>
        <taxon>Pseudomonadaceae</taxon>
        <taxon>Pseudomonas</taxon>
    </lineage>
</organism>
<accession>Q48LT4</accession>
<sequence>MSIKSDKWIRRMAQEHGMIEPFVERQVRGEGADRVISFGVSSYGYDVRCADEFKVFTNINSATVDPKNFDEKSFVDIKSDVCIIPPNSFALARTVEYFRIPRNVLTICLGKSTYARCGIIVNVTPLEPEWEGHVTLEFSNTTTLPAKIYANEGVAQMLFLESDEECEVSYKDRGGKYQGQRGVTLPRT</sequence>
<evidence type="ECO:0000255" key="1">
    <source>
        <dbReference type="HAMAP-Rule" id="MF_00146"/>
    </source>
</evidence>
<reference key="1">
    <citation type="journal article" date="2005" name="J. Bacteriol.">
        <title>Whole-genome sequence analysis of Pseudomonas syringae pv. phaseolicola 1448A reveals divergence among pathovars in genes involved in virulence and transposition.</title>
        <authorList>
            <person name="Joardar V."/>
            <person name="Lindeberg M."/>
            <person name="Jackson R.W."/>
            <person name="Selengut J."/>
            <person name="Dodson R."/>
            <person name="Brinkac L.M."/>
            <person name="Daugherty S.C."/>
            <person name="DeBoy R.T."/>
            <person name="Durkin A.S."/>
            <person name="Gwinn Giglio M."/>
            <person name="Madupu R."/>
            <person name="Nelson W.C."/>
            <person name="Rosovitz M.J."/>
            <person name="Sullivan S.A."/>
            <person name="Crabtree J."/>
            <person name="Creasy T."/>
            <person name="Davidsen T.M."/>
            <person name="Haft D.H."/>
            <person name="Zafar N."/>
            <person name="Zhou L."/>
            <person name="Halpin R."/>
            <person name="Holley T."/>
            <person name="Khouri H.M."/>
            <person name="Feldblyum T.V."/>
            <person name="White O."/>
            <person name="Fraser C.M."/>
            <person name="Chatterjee A.K."/>
            <person name="Cartinhour S."/>
            <person name="Schneider D."/>
            <person name="Mansfield J.W."/>
            <person name="Collmer A."/>
            <person name="Buell R."/>
        </authorList>
    </citation>
    <scope>NUCLEOTIDE SEQUENCE [LARGE SCALE GENOMIC DNA]</scope>
    <source>
        <strain>1448A / Race 6</strain>
    </source>
</reference>
<proteinExistence type="inferred from homology"/>
<comment type="function">
    <text evidence="1">Catalyzes the deamination of dCTP to dUTP.</text>
</comment>
<comment type="catalytic activity">
    <reaction evidence="1">
        <text>dCTP + H2O + H(+) = dUTP + NH4(+)</text>
        <dbReference type="Rhea" id="RHEA:22680"/>
        <dbReference type="ChEBI" id="CHEBI:15377"/>
        <dbReference type="ChEBI" id="CHEBI:15378"/>
        <dbReference type="ChEBI" id="CHEBI:28938"/>
        <dbReference type="ChEBI" id="CHEBI:61481"/>
        <dbReference type="ChEBI" id="CHEBI:61555"/>
        <dbReference type="EC" id="3.5.4.13"/>
    </reaction>
</comment>
<comment type="pathway">
    <text evidence="1">Pyrimidine metabolism; dUMP biosynthesis; dUMP from dCTP (dUTP route): step 1/2.</text>
</comment>
<comment type="subunit">
    <text evidence="1">Homotrimer.</text>
</comment>
<comment type="similarity">
    <text evidence="1">Belongs to the dCTP deaminase family.</text>
</comment>
<protein>
    <recommendedName>
        <fullName evidence="1">dCTP deaminase</fullName>
        <ecNumber evidence="1">3.5.4.13</ecNumber>
    </recommendedName>
    <alternativeName>
        <fullName evidence="1">Deoxycytidine triphosphate deaminase</fullName>
    </alternativeName>
</protein>
<name>DCD_PSE14</name>
<dbReference type="EC" id="3.5.4.13" evidence="1"/>
<dbReference type="EMBL" id="CP000058">
    <property type="protein sequence ID" value="AAZ35667.1"/>
    <property type="molecule type" value="Genomic_DNA"/>
</dbReference>
<dbReference type="RefSeq" id="WP_002554836.1">
    <property type="nucleotide sequence ID" value="NC_005773.3"/>
</dbReference>
<dbReference type="SMR" id="Q48LT4"/>
<dbReference type="GeneID" id="96220367"/>
<dbReference type="KEGG" id="psp:PSPPH_1381"/>
<dbReference type="eggNOG" id="COG0717">
    <property type="taxonomic scope" value="Bacteria"/>
</dbReference>
<dbReference type="HOGENOM" id="CLU_087476_4_0_6"/>
<dbReference type="UniPathway" id="UPA00610">
    <property type="reaction ID" value="UER00665"/>
</dbReference>
<dbReference type="Proteomes" id="UP000000551">
    <property type="component" value="Chromosome"/>
</dbReference>
<dbReference type="GO" id="GO:0008829">
    <property type="term" value="F:dCTP deaminase activity"/>
    <property type="evidence" value="ECO:0007669"/>
    <property type="project" value="UniProtKB-UniRule"/>
</dbReference>
<dbReference type="GO" id="GO:0000166">
    <property type="term" value="F:nucleotide binding"/>
    <property type="evidence" value="ECO:0007669"/>
    <property type="project" value="UniProtKB-KW"/>
</dbReference>
<dbReference type="GO" id="GO:0006226">
    <property type="term" value="P:dUMP biosynthetic process"/>
    <property type="evidence" value="ECO:0007669"/>
    <property type="project" value="UniProtKB-UniPathway"/>
</dbReference>
<dbReference type="GO" id="GO:0006229">
    <property type="term" value="P:dUTP biosynthetic process"/>
    <property type="evidence" value="ECO:0007669"/>
    <property type="project" value="UniProtKB-UniRule"/>
</dbReference>
<dbReference type="GO" id="GO:0015949">
    <property type="term" value="P:nucleobase-containing small molecule interconversion"/>
    <property type="evidence" value="ECO:0007669"/>
    <property type="project" value="TreeGrafter"/>
</dbReference>
<dbReference type="CDD" id="cd07557">
    <property type="entry name" value="trimeric_dUTPase"/>
    <property type="match status" value="1"/>
</dbReference>
<dbReference type="FunFam" id="2.70.40.10:FF:000001">
    <property type="entry name" value="dCTP deaminase"/>
    <property type="match status" value="1"/>
</dbReference>
<dbReference type="Gene3D" id="2.70.40.10">
    <property type="match status" value="1"/>
</dbReference>
<dbReference type="HAMAP" id="MF_00146">
    <property type="entry name" value="dCTP_deaminase"/>
    <property type="match status" value="1"/>
</dbReference>
<dbReference type="InterPro" id="IPR011962">
    <property type="entry name" value="dCTP_deaminase"/>
</dbReference>
<dbReference type="InterPro" id="IPR036157">
    <property type="entry name" value="dUTPase-like_sf"/>
</dbReference>
<dbReference type="InterPro" id="IPR033704">
    <property type="entry name" value="dUTPase_trimeric"/>
</dbReference>
<dbReference type="NCBIfam" id="TIGR02274">
    <property type="entry name" value="dCTP_deam"/>
    <property type="match status" value="1"/>
</dbReference>
<dbReference type="PANTHER" id="PTHR42680">
    <property type="entry name" value="DCTP DEAMINASE"/>
    <property type="match status" value="1"/>
</dbReference>
<dbReference type="PANTHER" id="PTHR42680:SF3">
    <property type="entry name" value="DCTP DEAMINASE"/>
    <property type="match status" value="1"/>
</dbReference>
<dbReference type="Pfam" id="PF22769">
    <property type="entry name" value="DCD"/>
    <property type="match status" value="1"/>
</dbReference>
<dbReference type="SUPFAM" id="SSF51283">
    <property type="entry name" value="dUTPase-like"/>
    <property type="match status" value="1"/>
</dbReference>
<gene>
    <name evidence="1" type="primary">dcd</name>
    <name type="ordered locus">PSPPH_1381</name>
</gene>
<feature type="chain" id="PRO_1000009781" description="dCTP deaminase">
    <location>
        <begin position="1"/>
        <end position="188"/>
    </location>
</feature>
<feature type="active site" description="Proton donor/acceptor" evidence="1">
    <location>
        <position position="137"/>
    </location>
</feature>
<feature type="binding site" evidence="1">
    <location>
        <begin position="111"/>
        <end position="116"/>
    </location>
    <ligand>
        <name>dCTP</name>
        <dbReference type="ChEBI" id="CHEBI:61481"/>
    </ligand>
</feature>
<feature type="binding site" evidence="1">
    <location>
        <begin position="135"/>
        <end position="137"/>
    </location>
    <ligand>
        <name>dCTP</name>
        <dbReference type="ChEBI" id="CHEBI:61481"/>
    </ligand>
</feature>
<feature type="binding site" evidence="1">
    <location>
        <position position="156"/>
    </location>
    <ligand>
        <name>dCTP</name>
        <dbReference type="ChEBI" id="CHEBI:61481"/>
    </ligand>
</feature>
<feature type="binding site" evidence="1">
    <location>
        <position position="170"/>
    </location>
    <ligand>
        <name>dCTP</name>
        <dbReference type="ChEBI" id="CHEBI:61481"/>
    </ligand>
</feature>
<feature type="binding site" evidence="1">
    <location>
        <position position="180"/>
    </location>
    <ligand>
        <name>dCTP</name>
        <dbReference type="ChEBI" id="CHEBI:61481"/>
    </ligand>
</feature>
<keyword id="KW-0378">Hydrolase</keyword>
<keyword id="KW-0546">Nucleotide metabolism</keyword>
<keyword id="KW-0547">Nucleotide-binding</keyword>